<organism>
    <name type="scientific">Mycoplasma capricolum subsp. capricolum (strain California kid / ATCC 27343 / NCTC 10154)</name>
    <dbReference type="NCBI Taxonomy" id="340047"/>
    <lineage>
        <taxon>Bacteria</taxon>
        <taxon>Bacillati</taxon>
        <taxon>Mycoplasmatota</taxon>
        <taxon>Mollicutes</taxon>
        <taxon>Mycoplasmataceae</taxon>
        <taxon>Mycoplasma</taxon>
    </lineage>
</organism>
<comment type="function">
    <text evidence="1">Has both ATPase and helicase activities. Unwinds DNA duplexes with 3' to 5' polarity with respect to the bound strand and initiates unwinding most effectively when a single-stranded region is present. Involved in the post-incision events of nucleotide excision repair and methyl-directed mismatch repair (By similarity).</text>
</comment>
<comment type="catalytic activity">
    <reaction>
        <text>Couples ATP hydrolysis with the unwinding of duplex DNA by translocating in the 3'-5' direction.</text>
        <dbReference type="EC" id="5.6.2.4"/>
    </reaction>
</comment>
<comment type="catalytic activity">
    <reaction>
        <text>ATP + H2O = ADP + phosphate + H(+)</text>
        <dbReference type="Rhea" id="RHEA:13065"/>
        <dbReference type="ChEBI" id="CHEBI:15377"/>
        <dbReference type="ChEBI" id="CHEBI:15378"/>
        <dbReference type="ChEBI" id="CHEBI:30616"/>
        <dbReference type="ChEBI" id="CHEBI:43474"/>
        <dbReference type="ChEBI" id="CHEBI:456216"/>
        <dbReference type="EC" id="5.6.2.4"/>
    </reaction>
</comment>
<comment type="similarity">
    <text evidence="4">Belongs to the helicase family. UvrD subfamily.</text>
</comment>
<proteinExistence type="inferred from homology"/>
<reference key="1">
    <citation type="submission" date="2005-09" db="EMBL/GenBank/DDBJ databases">
        <authorList>
            <person name="Glass J.I."/>
            <person name="Lartigue C."/>
            <person name="Pfannkoch C."/>
            <person name="Baden-Tillson H."/>
            <person name="Smith H.O."/>
            <person name="Venter J.C."/>
            <person name="Roske K."/>
            <person name="Wise K.S."/>
            <person name="Calcutt M.J."/>
            <person name="Nelson W.C."/>
            <person name="Nierman W.C."/>
        </authorList>
    </citation>
    <scope>NUCLEOTIDE SEQUENCE [LARGE SCALE GENOMIC DNA]</scope>
    <source>
        <strain>California kid / ATCC 27343 / NCTC 10154</strain>
    </source>
</reference>
<reference key="2">
    <citation type="journal article" date="1993" name="J. Biol. Chem.">
        <title>Unique monocistronic operon (ptsH) in Mycoplasma capricolum encoding the phosphocarrier protein, HPr, of the phosphoenolpyruvate:sugar phosphotransferase system. Cloning, sequencing, and characterization of ptsH.</title>
        <authorList>
            <person name="Zhu P.-P."/>
            <person name="Reizer J."/>
            <person name="Reizer A."/>
            <person name="Peterkofsky A."/>
        </authorList>
    </citation>
    <scope>NUCLEOTIDE SEQUENCE [GENOMIC DNA] OF 541-722</scope>
</reference>
<evidence type="ECO:0000250" key="1"/>
<evidence type="ECO:0000255" key="2">
    <source>
        <dbReference type="PROSITE-ProRule" id="PRU00560"/>
    </source>
</evidence>
<evidence type="ECO:0000255" key="3">
    <source>
        <dbReference type="PROSITE-ProRule" id="PRU00617"/>
    </source>
</evidence>
<evidence type="ECO:0000305" key="4"/>
<sequence>MSVDNLLDLLNDQQLAAVLNIDKPVRIIAGAGSGKTRVITTKIAYLIEKQNIDPSRILAVTFTNKAAKEMKERVLQITNNSFKSPFISTFHSWCSKVLRIDGKHIGLEDKFLIIDSDDQKRIIKSALKESNIELSENDKKTFDKKILYKIKEWKEELVDPSEAILNATSTLEKNFAVIYRLYQNTLLKNNSLDFDDLQIYVYRLFKQNNEILNKWRNAYDYVLVDEFQDTNELQFSLIKFLTINTNHLTVVGDPDQTIYSWRGAKLDIILNFNKTYSNAISIVLNQNYRSTKQILDISNSFIKNNKFREHKEIFTNNKSGKKVVLKECNSKTSEASYVSSKIKELVKQGYHYKDIFILYRMNAWSQEFEKELANKKIPFQLIGGIKFRERKVIKDAMAFLKMISIKDNLSSQRVLGLIPKIGNITIEKIINTANLNHLNIFDLITNEDKTLLHSITKNLDELIEVFKTAHQLYLDNTNIEEILKYLLIQSGYENKLKIRKEQDDLENINALYDQLKRFDEDFDPKYYSEENKLIAFLQEEALTSDIDEAEQIDKVSLLTVHAAKGLENKVVFITGLNQGIFPSRISETSINELEEERRALYVALTRAKDELFLTYVKGDYSHIMQSELKPSKFIHELDKDLYEFETQFLNTLLYDSNDYKQSSFYVSPKQHNLYNVGDHVEHKLFGKGVVVKIINDQLQISFTNSSYGIMMIATNNSALSKV</sequence>
<feature type="chain" id="PRO_0000102075" description="Probable DNA helicase II homolog">
    <location>
        <begin position="1"/>
        <end position="722"/>
    </location>
</feature>
<feature type="domain" description="UvrD-like helicase ATP-binding" evidence="2">
    <location>
        <begin position="8"/>
        <end position="291"/>
    </location>
</feature>
<feature type="domain" description="UvrD-like helicase C-terminal" evidence="3">
    <location>
        <begin position="292"/>
        <end position="565"/>
    </location>
</feature>
<feature type="binding site" evidence="2">
    <location>
        <begin position="32"/>
        <end position="37"/>
    </location>
    <ligand>
        <name>ATP</name>
        <dbReference type="ChEBI" id="CHEBI:30616"/>
    </ligand>
</feature>
<feature type="binding site" evidence="1">
    <location>
        <position position="289"/>
    </location>
    <ligand>
        <name>ATP</name>
        <dbReference type="ChEBI" id="CHEBI:30616"/>
    </ligand>
</feature>
<accession>P45612</accession>
<accession>Q2SRD6</accession>
<dbReference type="EC" id="5.6.2.4"/>
<dbReference type="EMBL" id="CP000123">
    <property type="protein sequence ID" value="ABC01643.1"/>
    <property type="molecule type" value="Genomic_DNA"/>
</dbReference>
<dbReference type="EMBL" id="L22432">
    <property type="protein sequence ID" value="AAA16212.1"/>
    <property type="molecule type" value="Unassigned_DNA"/>
</dbReference>
<dbReference type="PIR" id="D49683">
    <property type="entry name" value="D49683"/>
</dbReference>
<dbReference type="RefSeq" id="WP_011387561.1">
    <property type="nucleotide sequence ID" value="NC_007633.1"/>
</dbReference>
<dbReference type="SMR" id="P45612"/>
<dbReference type="GeneID" id="23778329"/>
<dbReference type="KEGG" id="mcp:MCAP_0717"/>
<dbReference type="HOGENOM" id="CLU_004585_5_2_14"/>
<dbReference type="PhylomeDB" id="P45612"/>
<dbReference type="Proteomes" id="UP000001928">
    <property type="component" value="Chromosome"/>
</dbReference>
<dbReference type="GO" id="GO:0005829">
    <property type="term" value="C:cytosol"/>
    <property type="evidence" value="ECO:0007669"/>
    <property type="project" value="TreeGrafter"/>
</dbReference>
<dbReference type="GO" id="GO:0033202">
    <property type="term" value="C:DNA helicase complex"/>
    <property type="evidence" value="ECO:0007669"/>
    <property type="project" value="TreeGrafter"/>
</dbReference>
<dbReference type="GO" id="GO:0043138">
    <property type="term" value="F:3'-5' DNA helicase activity"/>
    <property type="evidence" value="ECO:0007669"/>
    <property type="project" value="TreeGrafter"/>
</dbReference>
<dbReference type="GO" id="GO:0005524">
    <property type="term" value="F:ATP binding"/>
    <property type="evidence" value="ECO:0007669"/>
    <property type="project" value="UniProtKB-KW"/>
</dbReference>
<dbReference type="GO" id="GO:0016887">
    <property type="term" value="F:ATP hydrolysis activity"/>
    <property type="evidence" value="ECO:0007669"/>
    <property type="project" value="RHEA"/>
</dbReference>
<dbReference type="GO" id="GO:0003677">
    <property type="term" value="F:DNA binding"/>
    <property type="evidence" value="ECO:0007669"/>
    <property type="project" value="UniProtKB-KW"/>
</dbReference>
<dbReference type="GO" id="GO:0006260">
    <property type="term" value="P:DNA replication"/>
    <property type="evidence" value="ECO:0007669"/>
    <property type="project" value="UniProtKB-KW"/>
</dbReference>
<dbReference type="GO" id="GO:0000725">
    <property type="term" value="P:recombinational repair"/>
    <property type="evidence" value="ECO:0007669"/>
    <property type="project" value="TreeGrafter"/>
</dbReference>
<dbReference type="CDD" id="cd17932">
    <property type="entry name" value="DEXQc_UvrD"/>
    <property type="match status" value="1"/>
</dbReference>
<dbReference type="CDD" id="cd18807">
    <property type="entry name" value="SF1_C_UvrD"/>
    <property type="match status" value="1"/>
</dbReference>
<dbReference type="Gene3D" id="1.10.10.160">
    <property type="match status" value="1"/>
</dbReference>
<dbReference type="Gene3D" id="3.40.50.300">
    <property type="entry name" value="P-loop containing nucleotide triphosphate hydrolases"/>
    <property type="match status" value="2"/>
</dbReference>
<dbReference type="Gene3D" id="1.10.486.10">
    <property type="entry name" value="PCRA, domain 4"/>
    <property type="match status" value="1"/>
</dbReference>
<dbReference type="InterPro" id="IPR013986">
    <property type="entry name" value="DExx_box_DNA_helicase_dom_sf"/>
</dbReference>
<dbReference type="InterPro" id="IPR014017">
    <property type="entry name" value="DNA_helicase_UvrD-like_C"/>
</dbReference>
<dbReference type="InterPro" id="IPR000212">
    <property type="entry name" value="DNA_helicase_UvrD/REP"/>
</dbReference>
<dbReference type="InterPro" id="IPR027417">
    <property type="entry name" value="P-loop_NTPase"/>
</dbReference>
<dbReference type="InterPro" id="IPR014016">
    <property type="entry name" value="UvrD-like_ATP-bd"/>
</dbReference>
<dbReference type="PANTHER" id="PTHR11070:SF2">
    <property type="entry name" value="ATP-DEPENDENT DNA HELICASE SRS2"/>
    <property type="match status" value="1"/>
</dbReference>
<dbReference type="PANTHER" id="PTHR11070">
    <property type="entry name" value="UVRD / RECB / PCRA DNA HELICASE FAMILY MEMBER"/>
    <property type="match status" value="1"/>
</dbReference>
<dbReference type="Pfam" id="PF00580">
    <property type="entry name" value="UvrD-helicase"/>
    <property type="match status" value="1"/>
</dbReference>
<dbReference type="Pfam" id="PF13361">
    <property type="entry name" value="UvrD_C"/>
    <property type="match status" value="1"/>
</dbReference>
<dbReference type="SUPFAM" id="SSF52540">
    <property type="entry name" value="P-loop containing nucleoside triphosphate hydrolases"/>
    <property type="match status" value="1"/>
</dbReference>
<dbReference type="PROSITE" id="PS51198">
    <property type="entry name" value="UVRD_HELICASE_ATP_BIND"/>
    <property type="match status" value="1"/>
</dbReference>
<dbReference type="PROSITE" id="PS51217">
    <property type="entry name" value="UVRD_HELICASE_CTER"/>
    <property type="match status" value="1"/>
</dbReference>
<name>UVRD_MYCCT</name>
<protein>
    <recommendedName>
        <fullName>Probable DNA helicase II homolog</fullName>
        <ecNumber>5.6.2.4</ecNumber>
    </recommendedName>
    <alternativeName>
        <fullName evidence="4">DNA 3'-5' helicase II</fullName>
    </alternativeName>
</protein>
<keyword id="KW-0067">ATP-binding</keyword>
<keyword id="KW-0227">DNA damage</keyword>
<keyword id="KW-0234">DNA repair</keyword>
<keyword id="KW-0235">DNA replication</keyword>
<keyword id="KW-0238">DNA-binding</keyword>
<keyword id="KW-0347">Helicase</keyword>
<keyword id="KW-0378">Hydrolase</keyword>
<keyword id="KW-0413">Isomerase</keyword>
<keyword id="KW-0547">Nucleotide-binding</keyword>
<gene>
    <name type="primary">uvrD</name>
    <name type="synonym">pcrA</name>
    <name type="ordered locus">MCAP_0717</name>
</gene>